<reference key="1">
    <citation type="journal article" date="2009" name="BMC Microbiol.">
        <title>The genome sequence of Geobacter metallireducens: features of metabolism, physiology and regulation common and dissimilar to Geobacter sulfurreducens.</title>
        <authorList>
            <person name="Aklujkar M."/>
            <person name="Krushkal J."/>
            <person name="DiBartolo G."/>
            <person name="Lapidus A."/>
            <person name="Land M.L."/>
            <person name="Lovley D.R."/>
        </authorList>
    </citation>
    <scope>NUCLEOTIDE SEQUENCE [LARGE SCALE GENOMIC DNA]</scope>
    <source>
        <strain>ATCC 53774 / DSM 7210 / GS-15</strain>
    </source>
</reference>
<comment type="function">
    <text evidence="1">Catalyzes a salvage reaction resulting in the formation of AMP, that is energically less costly than de novo synthesis.</text>
</comment>
<comment type="catalytic activity">
    <reaction evidence="1">
        <text>AMP + diphosphate = 5-phospho-alpha-D-ribose 1-diphosphate + adenine</text>
        <dbReference type="Rhea" id="RHEA:16609"/>
        <dbReference type="ChEBI" id="CHEBI:16708"/>
        <dbReference type="ChEBI" id="CHEBI:33019"/>
        <dbReference type="ChEBI" id="CHEBI:58017"/>
        <dbReference type="ChEBI" id="CHEBI:456215"/>
        <dbReference type="EC" id="2.4.2.7"/>
    </reaction>
</comment>
<comment type="pathway">
    <text evidence="1">Purine metabolism; AMP biosynthesis via salvage pathway; AMP from adenine: step 1/1.</text>
</comment>
<comment type="subunit">
    <text evidence="1">Homodimer.</text>
</comment>
<comment type="subcellular location">
    <subcellularLocation>
        <location evidence="1">Cytoplasm</location>
    </subcellularLocation>
</comment>
<comment type="similarity">
    <text evidence="1">Belongs to the purine/pyrimidine phosphoribosyltransferase family.</text>
</comment>
<feature type="chain" id="PRO_1000000288" description="Adenine phosphoribosyltransferase">
    <location>
        <begin position="1"/>
        <end position="171"/>
    </location>
</feature>
<dbReference type="EC" id="2.4.2.7" evidence="1"/>
<dbReference type="EMBL" id="CP000148">
    <property type="protein sequence ID" value="ABB31656.1"/>
    <property type="molecule type" value="Genomic_DNA"/>
</dbReference>
<dbReference type="RefSeq" id="WP_004511645.1">
    <property type="nucleotide sequence ID" value="NC_007517.1"/>
</dbReference>
<dbReference type="SMR" id="Q39VR8"/>
<dbReference type="STRING" id="269799.Gmet_1422"/>
<dbReference type="KEGG" id="gme:Gmet_1422"/>
<dbReference type="eggNOG" id="COG0503">
    <property type="taxonomic scope" value="Bacteria"/>
</dbReference>
<dbReference type="HOGENOM" id="CLU_063339_3_0_7"/>
<dbReference type="UniPathway" id="UPA00588">
    <property type="reaction ID" value="UER00646"/>
</dbReference>
<dbReference type="Proteomes" id="UP000007073">
    <property type="component" value="Chromosome"/>
</dbReference>
<dbReference type="GO" id="GO:0005737">
    <property type="term" value="C:cytoplasm"/>
    <property type="evidence" value="ECO:0007669"/>
    <property type="project" value="UniProtKB-SubCell"/>
</dbReference>
<dbReference type="GO" id="GO:0002055">
    <property type="term" value="F:adenine binding"/>
    <property type="evidence" value="ECO:0007669"/>
    <property type="project" value="TreeGrafter"/>
</dbReference>
<dbReference type="GO" id="GO:0003999">
    <property type="term" value="F:adenine phosphoribosyltransferase activity"/>
    <property type="evidence" value="ECO:0007669"/>
    <property type="project" value="UniProtKB-UniRule"/>
</dbReference>
<dbReference type="GO" id="GO:0016208">
    <property type="term" value="F:AMP binding"/>
    <property type="evidence" value="ECO:0007669"/>
    <property type="project" value="TreeGrafter"/>
</dbReference>
<dbReference type="GO" id="GO:0006168">
    <property type="term" value="P:adenine salvage"/>
    <property type="evidence" value="ECO:0007669"/>
    <property type="project" value="InterPro"/>
</dbReference>
<dbReference type="GO" id="GO:0044209">
    <property type="term" value="P:AMP salvage"/>
    <property type="evidence" value="ECO:0007669"/>
    <property type="project" value="UniProtKB-UniRule"/>
</dbReference>
<dbReference type="GO" id="GO:0006166">
    <property type="term" value="P:purine ribonucleoside salvage"/>
    <property type="evidence" value="ECO:0007669"/>
    <property type="project" value="UniProtKB-KW"/>
</dbReference>
<dbReference type="CDD" id="cd06223">
    <property type="entry name" value="PRTases_typeI"/>
    <property type="match status" value="1"/>
</dbReference>
<dbReference type="FunFam" id="3.40.50.2020:FF:000021">
    <property type="entry name" value="Adenine phosphoribosyltransferase"/>
    <property type="match status" value="1"/>
</dbReference>
<dbReference type="Gene3D" id="3.40.50.2020">
    <property type="match status" value="1"/>
</dbReference>
<dbReference type="HAMAP" id="MF_00004">
    <property type="entry name" value="Aden_phosphoribosyltr"/>
    <property type="match status" value="1"/>
</dbReference>
<dbReference type="InterPro" id="IPR005764">
    <property type="entry name" value="Ade_phspho_trans"/>
</dbReference>
<dbReference type="InterPro" id="IPR000836">
    <property type="entry name" value="PRibTrfase_dom"/>
</dbReference>
<dbReference type="InterPro" id="IPR029057">
    <property type="entry name" value="PRTase-like"/>
</dbReference>
<dbReference type="InterPro" id="IPR050054">
    <property type="entry name" value="UPRTase/APRTase"/>
</dbReference>
<dbReference type="NCBIfam" id="TIGR01090">
    <property type="entry name" value="apt"/>
    <property type="match status" value="1"/>
</dbReference>
<dbReference type="NCBIfam" id="NF002634">
    <property type="entry name" value="PRK02304.1-3"/>
    <property type="match status" value="1"/>
</dbReference>
<dbReference type="NCBIfam" id="NF002636">
    <property type="entry name" value="PRK02304.1-5"/>
    <property type="match status" value="1"/>
</dbReference>
<dbReference type="PANTHER" id="PTHR32315">
    <property type="entry name" value="ADENINE PHOSPHORIBOSYLTRANSFERASE"/>
    <property type="match status" value="1"/>
</dbReference>
<dbReference type="PANTHER" id="PTHR32315:SF3">
    <property type="entry name" value="ADENINE PHOSPHORIBOSYLTRANSFERASE"/>
    <property type="match status" value="1"/>
</dbReference>
<dbReference type="Pfam" id="PF00156">
    <property type="entry name" value="Pribosyltran"/>
    <property type="match status" value="1"/>
</dbReference>
<dbReference type="SUPFAM" id="SSF53271">
    <property type="entry name" value="PRTase-like"/>
    <property type="match status" value="1"/>
</dbReference>
<sequence>MDELKNIIRDIPDFPKKGIVFKDITTLLADAKSFQRMVDLLAHRYVGEKIDKVVGVEARGFILGAALAYKLGAGVVLVRKPGKLPSETFSKTYQLEYGTDSLEIHTDAIRKGEKVLIADDVLATGGTMSAVVEMVRDLGGEIVECCFLAELDFLGGRKKLPDGKVFSLLTF</sequence>
<proteinExistence type="inferred from homology"/>
<organism>
    <name type="scientific">Geobacter metallireducens (strain ATCC 53774 / DSM 7210 / GS-15)</name>
    <dbReference type="NCBI Taxonomy" id="269799"/>
    <lineage>
        <taxon>Bacteria</taxon>
        <taxon>Pseudomonadati</taxon>
        <taxon>Thermodesulfobacteriota</taxon>
        <taxon>Desulfuromonadia</taxon>
        <taxon>Geobacterales</taxon>
        <taxon>Geobacteraceae</taxon>
        <taxon>Geobacter</taxon>
    </lineage>
</organism>
<evidence type="ECO:0000255" key="1">
    <source>
        <dbReference type="HAMAP-Rule" id="MF_00004"/>
    </source>
</evidence>
<keyword id="KW-0963">Cytoplasm</keyword>
<keyword id="KW-0328">Glycosyltransferase</keyword>
<keyword id="KW-0660">Purine salvage</keyword>
<keyword id="KW-1185">Reference proteome</keyword>
<keyword id="KW-0808">Transferase</keyword>
<protein>
    <recommendedName>
        <fullName evidence="1">Adenine phosphoribosyltransferase</fullName>
        <shortName evidence="1">APRT</shortName>
        <ecNumber evidence="1">2.4.2.7</ecNumber>
    </recommendedName>
</protein>
<gene>
    <name evidence="1" type="primary">apt</name>
    <name type="ordered locus">Gmet_1422</name>
</gene>
<name>APT_GEOMG</name>
<accession>Q39VR8</accession>